<dbReference type="EMBL" id="FM213366">
    <property type="protein sequence ID" value="CAR82571.1"/>
    <property type="molecule type" value="mRNA"/>
</dbReference>
<dbReference type="EMBL" id="AC022472">
    <property type="protein sequence ID" value="AAF79904.1"/>
    <property type="status" value="ALT_SEQ"/>
    <property type="molecule type" value="Genomic_DNA"/>
</dbReference>
<dbReference type="EMBL" id="CP002684">
    <property type="protein sequence ID" value="AEE29933.1"/>
    <property type="molecule type" value="Genomic_DNA"/>
</dbReference>
<dbReference type="EMBL" id="CP002684">
    <property type="protein sequence ID" value="ANM60121.1"/>
    <property type="molecule type" value="Genomic_DNA"/>
</dbReference>
<dbReference type="EMBL" id="CP002684">
    <property type="protein sequence ID" value="ANM60122.1"/>
    <property type="molecule type" value="Genomic_DNA"/>
</dbReference>
<dbReference type="EMBL" id="CP002684">
    <property type="protein sequence ID" value="ANM60123.1"/>
    <property type="molecule type" value="Genomic_DNA"/>
</dbReference>
<dbReference type="EMBL" id="CP002684">
    <property type="protein sequence ID" value="ANM60124.1"/>
    <property type="molecule type" value="Genomic_DNA"/>
</dbReference>
<dbReference type="PIR" id="E86334">
    <property type="entry name" value="E86334"/>
</dbReference>
<dbReference type="RefSeq" id="NP_001319049.1">
    <property type="nucleotide sequence ID" value="NM_001332435.1"/>
</dbReference>
<dbReference type="RefSeq" id="NP_001322429.1">
    <property type="nucleotide sequence ID" value="NM_001332438.1"/>
</dbReference>
<dbReference type="RefSeq" id="NP_001322430.1">
    <property type="nucleotide sequence ID" value="NM_001332436.1"/>
</dbReference>
<dbReference type="RefSeq" id="NP_001322431.1">
    <property type="nucleotide sequence ID" value="NM_001332437.1"/>
</dbReference>
<dbReference type="RefSeq" id="NP_173436.4">
    <property type="nucleotide sequence ID" value="NM_101862.5"/>
</dbReference>
<dbReference type="SMR" id="B6ETT4"/>
<dbReference type="FunCoup" id="B6ETT4">
    <property type="interactions" value="1522"/>
</dbReference>
<dbReference type="STRING" id="3702.B6ETT4"/>
<dbReference type="GlyGen" id="B6ETT4">
    <property type="glycosylation" value="1 site"/>
</dbReference>
<dbReference type="iPTMnet" id="B6ETT4"/>
<dbReference type="PaxDb" id="3702-AT1G20080.1"/>
<dbReference type="ProteomicsDB" id="233028"/>
<dbReference type="EnsemblPlants" id="AT1G20080.1">
    <property type="protein sequence ID" value="AT1G20080.1"/>
    <property type="gene ID" value="AT1G20080"/>
</dbReference>
<dbReference type="EnsemblPlants" id="AT1G20080.2">
    <property type="protein sequence ID" value="AT1G20080.2"/>
    <property type="gene ID" value="AT1G20080"/>
</dbReference>
<dbReference type="EnsemblPlants" id="AT1G20080.3">
    <property type="protein sequence ID" value="AT1G20080.3"/>
    <property type="gene ID" value="AT1G20080"/>
</dbReference>
<dbReference type="EnsemblPlants" id="AT1G20080.4">
    <property type="protein sequence ID" value="AT1G20080.4"/>
    <property type="gene ID" value="AT1G20080"/>
</dbReference>
<dbReference type="EnsemblPlants" id="AT1G20080.5">
    <property type="protein sequence ID" value="AT1G20080.5"/>
    <property type="gene ID" value="AT1G20080"/>
</dbReference>
<dbReference type="GeneID" id="838597"/>
<dbReference type="Gramene" id="AT1G20080.1">
    <property type="protein sequence ID" value="AT1G20080.1"/>
    <property type="gene ID" value="AT1G20080"/>
</dbReference>
<dbReference type="Gramene" id="AT1G20080.2">
    <property type="protein sequence ID" value="AT1G20080.2"/>
    <property type="gene ID" value="AT1G20080"/>
</dbReference>
<dbReference type="Gramene" id="AT1G20080.3">
    <property type="protein sequence ID" value="AT1G20080.3"/>
    <property type="gene ID" value="AT1G20080"/>
</dbReference>
<dbReference type="Gramene" id="AT1G20080.4">
    <property type="protein sequence ID" value="AT1G20080.4"/>
    <property type="gene ID" value="AT1G20080"/>
</dbReference>
<dbReference type="Gramene" id="AT1G20080.5">
    <property type="protein sequence ID" value="AT1G20080.5"/>
    <property type="gene ID" value="AT1G20080"/>
</dbReference>
<dbReference type="KEGG" id="ath:AT1G20080"/>
<dbReference type="Araport" id="AT1G20080"/>
<dbReference type="TAIR" id="AT1G20080">
    <property type="gene designation" value="SYTB"/>
</dbReference>
<dbReference type="eggNOG" id="KOG1012">
    <property type="taxonomic scope" value="Eukaryota"/>
</dbReference>
<dbReference type="HOGENOM" id="CLU_028927_1_1_1"/>
<dbReference type="InParanoid" id="B6ETT4"/>
<dbReference type="OMA" id="KAICNMT"/>
<dbReference type="PhylomeDB" id="B6ETT4"/>
<dbReference type="PRO" id="PR:B6ETT4"/>
<dbReference type="Proteomes" id="UP000006548">
    <property type="component" value="Chromosome 1"/>
</dbReference>
<dbReference type="ExpressionAtlas" id="B6ETT4">
    <property type="expression patterns" value="baseline and differential"/>
</dbReference>
<dbReference type="GO" id="GO:0005794">
    <property type="term" value="C:Golgi apparatus"/>
    <property type="evidence" value="ECO:0000314"/>
    <property type="project" value="TAIR"/>
</dbReference>
<dbReference type="GO" id="GO:0000139">
    <property type="term" value="C:Golgi membrane"/>
    <property type="evidence" value="ECO:0007669"/>
    <property type="project" value="UniProtKB-SubCell"/>
</dbReference>
<dbReference type="GO" id="GO:0008289">
    <property type="term" value="F:lipid binding"/>
    <property type="evidence" value="ECO:0007669"/>
    <property type="project" value="UniProtKB-KW"/>
</dbReference>
<dbReference type="GO" id="GO:0046872">
    <property type="term" value="F:metal ion binding"/>
    <property type="evidence" value="ECO:0007669"/>
    <property type="project" value="UniProtKB-KW"/>
</dbReference>
<dbReference type="GO" id="GO:0006869">
    <property type="term" value="P:lipid transport"/>
    <property type="evidence" value="ECO:0007669"/>
    <property type="project" value="UniProtKB-KW"/>
</dbReference>
<dbReference type="GO" id="GO:0009306">
    <property type="term" value="P:protein secretion"/>
    <property type="evidence" value="ECO:0000315"/>
    <property type="project" value="TAIR"/>
</dbReference>
<dbReference type="CDD" id="cd00030">
    <property type="entry name" value="C2"/>
    <property type="match status" value="1"/>
</dbReference>
<dbReference type="CDD" id="cd21677">
    <property type="entry name" value="SMP_SYT"/>
    <property type="match status" value="1"/>
</dbReference>
<dbReference type="FunFam" id="2.60.40.150:FF:000066">
    <property type="entry name" value="Extended synaptotagmin-2"/>
    <property type="match status" value="1"/>
</dbReference>
<dbReference type="FunFam" id="2.60.40.150:FF:000102">
    <property type="entry name" value="Synaptotagmin-2 isoform A"/>
    <property type="match status" value="1"/>
</dbReference>
<dbReference type="Gene3D" id="2.60.40.150">
    <property type="entry name" value="C2 domain"/>
    <property type="match status" value="2"/>
</dbReference>
<dbReference type="InterPro" id="IPR000008">
    <property type="entry name" value="C2_dom"/>
</dbReference>
<dbReference type="InterPro" id="IPR035892">
    <property type="entry name" value="C2_domain_sf"/>
</dbReference>
<dbReference type="InterPro" id="IPR031468">
    <property type="entry name" value="SMP_LBD"/>
</dbReference>
<dbReference type="InterPro" id="IPR045050">
    <property type="entry name" value="Synaptotagmin_plant"/>
</dbReference>
<dbReference type="InterPro" id="IPR039010">
    <property type="entry name" value="Synaptotagmin_SMP"/>
</dbReference>
<dbReference type="PANTHER" id="PTHR10774">
    <property type="entry name" value="EXTENDED SYNAPTOTAGMIN-RELATED"/>
    <property type="match status" value="1"/>
</dbReference>
<dbReference type="PANTHER" id="PTHR10774:SF188">
    <property type="entry name" value="SYNAPTOTAGMIN-2"/>
    <property type="match status" value="1"/>
</dbReference>
<dbReference type="Pfam" id="PF00168">
    <property type="entry name" value="C2"/>
    <property type="match status" value="2"/>
</dbReference>
<dbReference type="Pfam" id="PF17047">
    <property type="entry name" value="SMP_LBD"/>
    <property type="match status" value="1"/>
</dbReference>
<dbReference type="PRINTS" id="PR00360">
    <property type="entry name" value="C2DOMAIN"/>
</dbReference>
<dbReference type="SMART" id="SM00239">
    <property type="entry name" value="C2"/>
    <property type="match status" value="2"/>
</dbReference>
<dbReference type="SUPFAM" id="SSF49562">
    <property type="entry name" value="C2 domain (Calcium/lipid-binding domain, CaLB)"/>
    <property type="match status" value="2"/>
</dbReference>
<dbReference type="PROSITE" id="PS50004">
    <property type="entry name" value="C2"/>
    <property type="match status" value="2"/>
</dbReference>
<dbReference type="PROSITE" id="PS51847">
    <property type="entry name" value="SMP"/>
    <property type="match status" value="1"/>
</dbReference>
<sequence length="537" mass="60837">MGIISTILGVIGFGFGTTIGIVIGYYLFIYFQSTDVEDPEIKPLVELDSETIATMFPEIPMWVKNPDFDRIDWLNKLIGHMWPYMDKAICKMAKSIAKPIIAEQIPNYKIDSVEFEMLTLGSLPPSFQGMKVYATDDKEIIMELSVKWAGNPNIIVVAKAFGLKATVQVIDLQVYATPRITLKPLVPSFPCFANIFVSLMDKPQVDFGLKLLGADVMAIPGLYRFVQEIIKDQVANMYLWPKTLNVQIMDPSKAMKKPVGLLSVKVIKAIKLKKKDLLGGSDPYVKLTLSGDKVPGKKTVVKHSNLNPEWNEEFDLVVKEPESQELQLIVYDWEQVGKHDKIGMNVIQLKDLTPEEPKLMTLELLKSMEPKEPVSEKSRGQLVVEVEYKPFKDDDIPENIDDPNAVEKAPEGTPSTGGLLVVIVHEAEDLEGKYHTNPSVRLLFRGEERKTKRVKKNREPRWDEDFQFPLDEPPINDKLHVEVISSSSRLIHPKETLGYVVINLGDVVSNRRINDKYHLIDSKNGRIQIELQWRNSS</sequence>
<name>SYT2_ARATH</name>
<proteinExistence type="evidence at transcript level"/>
<organism>
    <name type="scientific">Arabidopsis thaliana</name>
    <name type="common">Mouse-ear cress</name>
    <dbReference type="NCBI Taxonomy" id="3702"/>
    <lineage>
        <taxon>Eukaryota</taxon>
        <taxon>Viridiplantae</taxon>
        <taxon>Streptophyta</taxon>
        <taxon>Embryophyta</taxon>
        <taxon>Tracheophyta</taxon>
        <taxon>Spermatophyta</taxon>
        <taxon>Magnoliopsida</taxon>
        <taxon>eudicotyledons</taxon>
        <taxon>Gunneridae</taxon>
        <taxon>Pentapetalae</taxon>
        <taxon>rosids</taxon>
        <taxon>malvids</taxon>
        <taxon>Brassicales</taxon>
        <taxon>Brassicaceae</taxon>
        <taxon>Camelineae</taxon>
        <taxon>Arabidopsis</taxon>
    </lineage>
</organism>
<protein>
    <recommendedName>
        <fullName>Synaptotagmin-2</fullName>
    </recommendedName>
    <alternativeName>
        <fullName>NTMC2T1.2</fullName>
    </alternativeName>
    <alternativeName>
        <fullName>Synaptotagmin B</fullName>
    </alternativeName>
</protein>
<evidence type="ECO:0000250" key="1"/>
<evidence type="ECO:0000255" key="2"/>
<evidence type="ECO:0000255" key="3">
    <source>
        <dbReference type="PROSITE-ProRule" id="PRU00041"/>
    </source>
</evidence>
<evidence type="ECO:0000255" key="4">
    <source>
        <dbReference type="PROSITE-ProRule" id="PRU01194"/>
    </source>
</evidence>
<evidence type="ECO:0000269" key="5">
    <source>
    </source>
</evidence>
<evidence type="ECO:0000305" key="6"/>
<evidence type="ECO:0000305" key="7">
    <source>
    </source>
</evidence>
<keyword id="KW-0106">Calcium</keyword>
<keyword id="KW-0333">Golgi apparatus</keyword>
<keyword id="KW-0445">Lipid transport</keyword>
<keyword id="KW-0446">Lipid-binding</keyword>
<keyword id="KW-0472">Membrane</keyword>
<keyword id="KW-0479">Metal-binding</keyword>
<keyword id="KW-1185">Reference proteome</keyword>
<keyword id="KW-0677">Repeat</keyword>
<keyword id="KW-0812">Transmembrane</keyword>
<keyword id="KW-1133">Transmembrane helix</keyword>
<keyword id="KW-0813">Transport</keyword>
<gene>
    <name type="primary">SYT2</name>
    <name type="synonym">SYTB</name>
    <name type="ordered locus">At1g20080</name>
    <name type="ORF">T20H2.13</name>
</gene>
<reference key="1">
    <citation type="journal article" date="2007" name="BMC Genomics">
        <title>Evolutionary genomics of plant genes encoding N-terminal-TM-C2 domain proteins and the similar FAM62 genes and synaptotagmin genes of metazoans.</title>
        <authorList>
            <person name="Craxton M."/>
        </authorList>
    </citation>
    <scope>NUCLEOTIDE SEQUENCE [MRNA]</scope>
</reference>
<reference key="2">
    <citation type="journal article" date="2000" name="Nature">
        <title>Sequence and analysis of chromosome 1 of the plant Arabidopsis thaliana.</title>
        <authorList>
            <person name="Theologis A."/>
            <person name="Ecker J.R."/>
            <person name="Palm C.J."/>
            <person name="Federspiel N.A."/>
            <person name="Kaul S."/>
            <person name="White O."/>
            <person name="Alonso J."/>
            <person name="Altafi H."/>
            <person name="Araujo R."/>
            <person name="Bowman C.L."/>
            <person name="Brooks S.Y."/>
            <person name="Buehler E."/>
            <person name="Chan A."/>
            <person name="Chao Q."/>
            <person name="Chen H."/>
            <person name="Cheuk R.F."/>
            <person name="Chin C.W."/>
            <person name="Chung M.K."/>
            <person name="Conn L."/>
            <person name="Conway A.B."/>
            <person name="Conway A.R."/>
            <person name="Creasy T.H."/>
            <person name="Dewar K."/>
            <person name="Dunn P."/>
            <person name="Etgu P."/>
            <person name="Feldblyum T.V."/>
            <person name="Feng J.-D."/>
            <person name="Fong B."/>
            <person name="Fujii C.Y."/>
            <person name="Gill J.E."/>
            <person name="Goldsmith A.D."/>
            <person name="Haas B."/>
            <person name="Hansen N.F."/>
            <person name="Hughes B."/>
            <person name="Huizar L."/>
            <person name="Hunter J.L."/>
            <person name="Jenkins J."/>
            <person name="Johnson-Hopson C."/>
            <person name="Khan S."/>
            <person name="Khaykin E."/>
            <person name="Kim C.J."/>
            <person name="Koo H.L."/>
            <person name="Kremenetskaia I."/>
            <person name="Kurtz D.B."/>
            <person name="Kwan A."/>
            <person name="Lam B."/>
            <person name="Langin-Hooper S."/>
            <person name="Lee A."/>
            <person name="Lee J.M."/>
            <person name="Lenz C.A."/>
            <person name="Li J.H."/>
            <person name="Li Y.-P."/>
            <person name="Lin X."/>
            <person name="Liu S.X."/>
            <person name="Liu Z.A."/>
            <person name="Luros J.S."/>
            <person name="Maiti R."/>
            <person name="Marziali A."/>
            <person name="Militscher J."/>
            <person name="Miranda M."/>
            <person name="Nguyen M."/>
            <person name="Nierman W.C."/>
            <person name="Osborne B.I."/>
            <person name="Pai G."/>
            <person name="Peterson J."/>
            <person name="Pham P.K."/>
            <person name="Rizzo M."/>
            <person name="Rooney T."/>
            <person name="Rowley D."/>
            <person name="Sakano H."/>
            <person name="Salzberg S.L."/>
            <person name="Schwartz J.R."/>
            <person name="Shinn P."/>
            <person name="Southwick A.M."/>
            <person name="Sun H."/>
            <person name="Tallon L.J."/>
            <person name="Tambunga G."/>
            <person name="Toriumi M.J."/>
            <person name="Town C.D."/>
            <person name="Utterback T."/>
            <person name="Van Aken S."/>
            <person name="Vaysberg M."/>
            <person name="Vysotskaia V.S."/>
            <person name="Walker M."/>
            <person name="Wu D."/>
            <person name="Yu G."/>
            <person name="Fraser C.M."/>
            <person name="Venter J.C."/>
            <person name="Davis R.W."/>
        </authorList>
    </citation>
    <scope>NUCLEOTIDE SEQUENCE [LARGE SCALE GENOMIC DNA]</scope>
    <source>
        <strain>cv. Columbia</strain>
    </source>
</reference>
<reference key="3">
    <citation type="journal article" date="2017" name="Plant J.">
        <title>Araport11: a complete reannotation of the Arabidopsis thaliana reference genome.</title>
        <authorList>
            <person name="Cheng C.Y."/>
            <person name="Krishnakumar V."/>
            <person name="Chan A.P."/>
            <person name="Thibaud-Nissen F."/>
            <person name="Schobel S."/>
            <person name="Town C.D."/>
        </authorList>
    </citation>
    <scope>GENOME REANNOTATION</scope>
    <source>
        <strain>cv. Columbia</strain>
    </source>
</reference>
<reference key="4">
    <citation type="journal article" date="2011" name="PLoS ONE">
        <title>Golgi apparatus-localized synaptotagmin 2 is required for unconventional secretion in Arabidopsis.</title>
        <authorList>
            <person name="Zhang H."/>
            <person name="Zhang L."/>
            <person name="Gao B."/>
            <person name="Fan H."/>
            <person name="Jin J."/>
            <person name="Botella M.A."/>
            <person name="Jiang L."/>
            <person name="Lin J."/>
        </authorList>
    </citation>
    <scope>FUNCTION</scope>
    <scope>SUBCELLULAR LOCATION</scope>
</reference>
<comment type="function">
    <text evidence="5">May play an important role in regulating an unconventional protein trafficking from the cytosol to the extracellular matrix.</text>
</comment>
<comment type="cofactor">
    <cofactor evidence="1">
        <name>Ca(2+)</name>
        <dbReference type="ChEBI" id="CHEBI:29108"/>
    </cofactor>
</comment>
<comment type="subcellular location">
    <subcellularLocation>
        <location evidence="7">Golgi apparatus membrane</location>
        <topology evidence="7">Single-pass membrane protein</topology>
    </subcellularLocation>
</comment>
<comment type="similarity">
    <text evidence="6">Belongs to the synaptotagmin family.</text>
</comment>
<comment type="sequence caution" evidence="6">
    <conflict type="erroneous gene model prediction">
        <sequence resource="EMBL-CDS" id="AAF79904"/>
    </conflict>
</comment>
<accession>B6ETT4</accession>
<accession>Q9LNT5</accession>
<feature type="chain" id="PRO_0000419239" description="Synaptotagmin-2">
    <location>
        <begin position="1"/>
        <end position="537"/>
    </location>
</feature>
<feature type="topological domain" description="Cytoplasmic" evidence="2">
    <location>
        <begin position="1"/>
        <end position="2"/>
    </location>
</feature>
<feature type="transmembrane region" description="Helical" evidence="2">
    <location>
        <begin position="3"/>
        <end position="23"/>
    </location>
</feature>
<feature type="topological domain" description="Lumenal" evidence="2">
    <location>
        <begin position="24"/>
        <end position="537"/>
    </location>
</feature>
<feature type="domain" description="SMP-LTD" evidence="4">
    <location>
        <begin position="67"/>
        <end position="249"/>
    </location>
</feature>
<feature type="domain" description="C2 1" evidence="3">
    <location>
        <begin position="240"/>
        <end position="362"/>
    </location>
</feature>
<feature type="domain" description="C2 2" evidence="3">
    <location>
        <begin position="402"/>
        <end position="517"/>
    </location>
</feature>
<feature type="region of interest" description="Phospholipid binding" evidence="1">
    <location>
        <begin position="227"/>
        <end position="505"/>
    </location>
</feature>
<feature type="binding site" evidence="1">
    <location>
        <position position="276"/>
    </location>
    <ligand>
        <name>Ca(2+)</name>
        <dbReference type="ChEBI" id="CHEBI:29108"/>
    </ligand>
</feature>
<feature type="binding site" evidence="1">
    <location>
        <position position="282"/>
    </location>
    <ligand>
        <name>Ca(2+)</name>
        <dbReference type="ChEBI" id="CHEBI:29108"/>
    </ligand>
</feature>
<feature type="binding site" evidence="1">
    <location>
        <position position="332"/>
    </location>
    <ligand>
        <name>Ca(2+)</name>
        <dbReference type="ChEBI" id="CHEBI:29108"/>
    </ligand>
</feature>
<feature type="binding site" evidence="1">
    <location>
        <position position="334"/>
    </location>
    <ligand>
        <name>Ca(2+)</name>
        <dbReference type="ChEBI" id="CHEBI:29108"/>
    </ligand>
</feature>